<gene>
    <name evidence="1" type="primary">psbH</name>
    <name type="ordered locus">PCC7424_4234</name>
</gene>
<feature type="chain" id="PRO_1000192870" description="Photosystem II reaction center protein H">
    <location>
        <begin position="1"/>
        <end position="67"/>
    </location>
</feature>
<feature type="transmembrane region" description="Helical" evidence="1">
    <location>
        <begin position="29"/>
        <end position="49"/>
    </location>
</feature>
<evidence type="ECO:0000255" key="1">
    <source>
        <dbReference type="HAMAP-Rule" id="MF_00752"/>
    </source>
</evidence>
<name>PSBH_GLOC7</name>
<sequence length="67" mass="7623">MAQRTWLGDILRPLNSEYGKVAPGWGTTGLMGVFMLLFFVFLLIILQIYNSSLLLEGFKVDWRSLGQ</sequence>
<keyword id="KW-0472">Membrane</keyword>
<keyword id="KW-0602">Photosynthesis</keyword>
<keyword id="KW-0604">Photosystem II</keyword>
<keyword id="KW-1185">Reference proteome</keyword>
<keyword id="KW-0793">Thylakoid</keyword>
<keyword id="KW-0812">Transmembrane</keyword>
<keyword id="KW-1133">Transmembrane helix</keyword>
<protein>
    <recommendedName>
        <fullName evidence="1">Photosystem II reaction center protein H</fullName>
        <shortName evidence="1">PSII-H</shortName>
    </recommendedName>
</protein>
<dbReference type="EMBL" id="CP001291">
    <property type="protein sequence ID" value="ACK72604.1"/>
    <property type="molecule type" value="Genomic_DNA"/>
</dbReference>
<dbReference type="RefSeq" id="WP_015956189.1">
    <property type="nucleotide sequence ID" value="NC_011729.1"/>
</dbReference>
<dbReference type="SMR" id="B7K6Q5"/>
<dbReference type="STRING" id="65393.PCC7424_4234"/>
<dbReference type="KEGG" id="cyc:PCC7424_4234"/>
<dbReference type="eggNOG" id="ENOG50332MV">
    <property type="taxonomic scope" value="Bacteria"/>
</dbReference>
<dbReference type="HOGENOM" id="CLU_190203_0_0_3"/>
<dbReference type="Proteomes" id="UP000002384">
    <property type="component" value="Chromosome"/>
</dbReference>
<dbReference type="GO" id="GO:0009523">
    <property type="term" value="C:photosystem II"/>
    <property type="evidence" value="ECO:0007669"/>
    <property type="project" value="UniProtKB-KW"/>
</dbReference>
<dbReference type="GO" id="GO:0031676">
    <property type="term" value="C:plasma membrane-derived thylakoid membrane"/>
    <property type="evidence" value="ECO:0007669"/>
    <property type="project" value="UniProtKB-SubCell"/>
</dbReference>
<dbReference type="GO" id="GO:0042301">
    <property type="term" value="F:phosphate ion binding"/>
    <property type="evidence" value="ECO:0007669"/>
    <property type="project" value="InterPro"/>
</dbReference>
<dbReference type="GO" id="GO:0015979">
    <property type="term" value="P:photosynthesis"/>
    <property type="evidence" value="ECO:0007669"/>
    <property type="project" value="UniProtKB-UniRule"/>
</dbReference>
<dbReference type="GO" id="GO:0050821">
    <property type="term" value="P:protein stabilization"/>
    <property type="evidence" value="ECO:0007669"/>
    <property type="project" value="InterPro"/>
</dbReference>
<dbReference type="Gene3D" id="1.20.5.880">
    <property type="entry name" value="Photosystem II reaction center protein H"/>
    <property type="match status" value="1"/>
</dbReference>
<dbReference type="HAMAP" id="MF_00752">
    <property type="entry name" value="PSII_PsbH"/>
    <property type="match status" value="1"/>
</dbReference>
<dbReference type="InterPro" id="IPR001056">
    <property type="entry name" value="PSII_PsbH"/>
</dbReference>
<dbReference type="InterPro" id="IPR036863">
    <property type="entry name" value="PSII_PsbH_sf"/>
</dbReference>
<dbReference type="NCBIfam" id="NF002728">
    <property type="entry name" value="PRK02624.1"/>
    <property type="match status" value="1"/>
</dbReference>
<dbReference type="PANTHER" id="PTHR34469">
    <property type="entry name" value="PHOTOSYSTEM II REACTION CENTER PROTEIN H"/>
    <property type="match status" value="1"/>
</dbReference>
<dbReference type="PANTHER" id="PTHR34469:SF4">
    <property type="entry name" value="PHOTOSYSTEM II REACTION CENTER PROTEIN H"/>
    <property type="match status" value="1"/>
</dbReference>
<dbReference type="Pfam" id="PF00737">
    <property type="entry name" value="PsbH"/>
    <property type="match status" value="1"/>
</dbReference>
<dbReference type="SUPFAM" id="SSF161025">
    <property type="entry name" value="Photosystem II 10 kDa phosphoprotein PsbH"/>
    <property type="match status" value="1"/>
</dbReference>
<accession>B7K6Q5</accession>
<organism>
    <name type="scientific">Gloeothece citriformis (strain PCC 7424)</name>
    <name type="common">Cyanothece sp. (strain PCC 7424)</name>
    <dbReference type="NCBI Taxonomy" id="65393"/>
    <lineage>
        <taxon>Bacteria</taxon>
        <taxon>Bacillati</taxon>
        <taxon>Cyanobacteriota</taxon>
        <taxon>Cyanophyceae</taxon>
        <taxon>Oscillatoriophycideae</taxon>
        <taxon>Chroococcales</taxon>
        <taxon>Aphanothecaceae</taxon>
        <taxon>Gloeothece</taxon>
        <taxon>Gloeothece citriformis</taxon>
    </lineage>
</organism>
<proteinExistence type="inferred from homology"/>
<reference key="1">
    <citation type="journal article" date="2011" name="MBio">
        <title>Novel metabolic attributes of the genus Cyanothece, comprising a group of unicellular nitrogen-fixing Cyanobacteria.</title>
        <authorList>
            <person name="Bandyopadhyay A."/>
            <person name="Elvitigala T."/>
            <person name="Welsh E."/>
            <person name="Stockel J."/>
            <person name="Liberton M."/>
            <person name="Min H."/>
            <person name="Sherman L.A."/>
            <person name="Pakrasi H.B."/>
        </authorList>
    </citation>
    <scope>NUCLEOTIDE SEQUENCE [LARGE SCALE GENOMIC DNA]</scope>
    <source>
        <strain>PCC 7424</strain>
    </source>
</reference>
<comment type="function">
    <text evidence="1">One of the components of the core complex of photosystem II (PSII), required for its stability and/or assembly. PSII is a light-driven water:plastoquinone oxidoreductase that uses light energy to abstract electrons from H(2)O, generating O(2) and a proton gradient subsequently used for ATP formation. It consists of a core antenna complex that captures photons, and an electron transfer chain that converts photonic excitation into a charge separation.</text>
</comment>
<comment type="subunit">
    <text evidence="1">PSII is composed of 1 copy each of membrane proteins PsbA, PsbB, PsbC, PsbD, PsbE, PsbF, PsbH, PsbI, PsbJ, PsbK, PsbL, PsbM, PsbT, PsbX, PsbY, PsbZ, Psb30/Ycf12, peripheral proteins PsbO, CyanoQ (PsbQ), PsbU, PsbV and a large number of cofactors. It forms dimeric complexes.</text>
</comment>
<comment type="subcellular location">
    <subcellularLocation>
        <location evidence="1">Cellular thylakoid membrane</location>
        <topology evidence="1">Single-pass membrane protein</topology>
    </subcellularLocation>
</comment>
<comment type="similarity">
    <text evidence="1">Belongs to the PsbH family.</text>
</comment>